<gene>
    <name evidence="1" type="primary">rplN</name>
    <name type="ordered locus">Rv0714</name>
    <name type="ORF">MTCY210.33</name>
</gene>
<sequence length="122" mass="13428">MIQQESRLKVADNTGAKEILCIRVLGGSSRRYAGIGDVIVATVKDAIPGGNVKRGDVVKAVVVRTVKERRRPDGSYIKFDENAAVIIKPDNDPRGTRIFGPVGRELREKRFMKIISLAPEVL</sequence>
<feature type="chain" id="PRO_0000128554" description="Large ribosomal subunit protein uL14">
    <location>
        <begin position="1"/>
        <end position="122"/>
    </location>
</feature>
<name>RL14_MYCTU</name>
<evidence type="ECO:0000255" key="1">
    <source>
        <dbReference type="HAMAP-Rule" id="MF_01367"/>
    </source>
</evidence>
<evidence type="ECO:0000305" key="2"/>
<proteinExistence type="evidence at protein level"/>
<accession>P9WHD9</accession>
<accession>L0T7A6</accession>
<accession>P66069</accession>
<accession>P95062</accession>
<protein>
    <recommendedName>
        <fullName evidence="1">Large ribosomal subunit protein uL14</fullName>
    </recommendedName>
    <alternativeName>
        <fullName evidence="2">50S ribosomal protein L14</fullName>
    </alternativeName>
</protein>
<comment type="function">
    <text evidence="1">Binds to 23S rRNA. Forms part of two intersubunit bridges in the 70S ribosome.</text>
</comment>
<comment type="subunit">
    <text evidence="1">Part of the 50S ribosomal subunit. Forms a cluster with proteins L3 and L19. In the 70S ribosome, L14 and L19 interact and together make contacts with the 16S rRNA in bridges B5 and B8.</text>
</comment>
<comment type="similarity">
    <text evidence="1">Belongs to the universal ribosomal protein uL14 family.</text>
</comment>
<dbReference type="EMBL" id="AL123456">
    <property type="protein sequence ID" value="CCP43458.1"/>
    <property type="molecule type" value="Genomic_DNA"/>
</dbReference>
<dbReference type="PIR" id="E70643">
    <property type="entry name" value="E70643"/>
</dbReference>
<dbReference type="RefSeq" id="NP_215228.1">
    <property type="nucleotide sequence ID" value="NC_000962.3"/>
</dbReference>
<dbReference type="RefSeq" id="WP_003403649.1">
    <property type="nucleotide sequence ID" value="NZ_NVQJ01000007.1"/>
</dbReference>
<dbReference type="PDB" id="5V7Q">
    <property type="method" value="EM"/>
    <property type="resolution" value="3.70 A"/>
    <property type="chains" value="K=1-122"/>
</dbReference>
<dbReference type="PDB" id="5V93">
    <property type="method" value="EM"/>
    <property type="resolution" value="4.00 A"/>
    <property type="chains" value="K=1-122"/>
</dbReference>
<dbReference type="PDB" id="7KGB">
    <property type="method" value="EM"/>
    <property type="resolution" value="2.70 A"/>
    <property type="chains" value="K=1-122"/>
</dbReference>
<dbReference type="PDB" id="7MSC">
    <property type="method" value="EM"/>
    <property type="resolution" value="2.97 A"/>
    <property type="chains" value="K=1-122"/>
</dbReference>
<dbReference type="PDB" id="7MSH">
    <property type="method" value="EM"/>
    <property type="resolution" value="3.23 A"/>
    <property type="chains" value="K=1-122"/>
</dbReference>
<dbReference type="PDB" id="7MSM">
    <property type="method" value="EM"/>
    <property type="resolution" value="2.79 A"/>
    <property type="chains" value="K=1-122"/>
</dbReference>
<dbReference type="PDB" id="7MSZ">
    <property type="method" value="EM"/>
    <property type="resolution" value="3.10 A"/>
    <property type="chains" value="K=1-122"/>
</dbReference>
<dbReference type="PDB" id="7MT2">
    <property type="method" value="EM"/>
    <property type="resolution" value="2.76 A"/>
    <property type="chains" value="K=1-122"/>
</dbReference>
<dbReference type="PDB" id="7MT3">
    <property type="method" value="EM"/>
    <property type="resolution" value="2.80 A"/>
    <property type="chains" value="K=1-122"/>
</dbReference>
<dbReference type="PDB" id="7MT7">
    <property type="method" value="EM"/>
    <property type="resolution" value="2.71 A"/>
    <property type="chains" value="K=1-122"/>
</dbReference>
<dbReference type="PDB" id="7SFR">
    <property type="method" value="EM"/>
    <property type="resolution" value="2.60 A"/>
    <property type="chains" value="K=1-122"/>
</dbReference>
<dbReference type="PDBsum" id="5V7Q"/>
<dbReference type="PDBsum" id="5V93"/>
<dbReference type="PDBsum" id="7KGB"/>
<dbReference type="PDBsum" id="7MSC"/>
<dbReference type="PDBsum" id="7MSH"/>
<dbReference type="PDBsum" id="7MSM"/>
<dbReference type="PDBsum" id="7MSZ"/>
<dbReference type="PDBsum" id="7MT2"/>
<dbReference type="PDBsum" id="7MT3"/>
<dbReference type="PDBsum" id="7MT7"/>
<dbReference type="PDBsum" id="7SFR"/>
<dbReference type="EMDB" id="EMD-8645"/>
<dbReference type="SMR" id="P9WHD9"/>
<dbReference type="FunCoup" id="P9WHD9">
    <property type="interactions" value="400"/>
</dbReference>
<dbReference type="IntAct" id="P9WHD9">
    <property type="interactions" value="1"/>
</dbReference>
<dbReference type="STRING" id="83332.Rv0714"/>
<dbReference type="PaxDb" id="83332-Rv0714"/>
<dbReference type="DNASU" id="888411"/>
<dbReference type="GeneID" id="888411"/>
<dbReference type="GeneID" id="93493169"/>
<dbReference type="KEGG" id="mtu:Rv0714"/>
<dbReference type="KEGG" id="mtv:RVBD_0714"/>
<dbReference type="TubercuList" id="Rv0714"/>
<dbReference type="eggNOG" id="COG0093">
    <property type="taxonomic scope" value="Bacteria"/>
</dbReference>
<dbReference type="InParanoid" id="P9WHD9"/>
<dbReference type="OrthoDB" id="9806379at2"/>
<dbReference type="PhylomeDB" id="P9WHD9"/>
<dbReference type="PRO" id="PR:P9WHD9"/>
<dbReference type="Proteomes" id="UP000001584">
    <property type="component" value="Chromosome"/>
</dbReference>
<dbReference type="GO" id="GO:0022625">
    <property type="term" value="C:cytosolic large ribosomal subunit"/>
    <property type="evidence" value="ECO:0000318"/>
    <property type="project" value="GO_Central"/>
</dbReference>
<dbReference type="GO" id="GO:0005886">
    <property type="term" value="C:plasma membrane"/>
    <property type="evidence" value="ECO:0007005"/>
    <property type="project" value="MTBBASE"/>
</dbReference>
<dbReference type="GO" id="GO:0070180">
    <property type="term" value="F:large ribosomal subunit rRNA binding"/>
    <property type="evidence" value="ECO:0000318"/>
    <property type="project" value="GO_Central"/>
</dbReference>
<dbReference type="GO" id="GO:0003735">
    <property type="term" value="F:structural constituent of ribosome"/>
    <property type="evidence" value="ECO:0000318"/>
    <property type="project" value="GO_Central"/>
</dbReference>
<dbReference type="GO" id="GO:0006412">
    <property type="term" value="P:translation"/>
    <property type="evidence" value="ECO:0007669"/>
    <property type="project" value="UniProtKB-UniRule"/>
</dbReference>
<dbReference type="CDD" id="cd00337">
    <property type="entry name" value="Ribosomal_uL14"/>
    <property type="match status" value="1"/>
</dbReference>
<dbReference type="FunFam" id="2.40.150.20:FF:000001">
    <property type="entry name" value="50S ribosomal protein L14"/>
    <property type="match status" value="1"/>
</dbReference>
<dbReference type="Gene3D" id="2.40.150.20">
    <property type="entry name" value="Ribosomal protein L14"/>
    <property type="match status" value="1"/>
</dbReference>
<dbReference type="HAMAP" id="MF_01367">
    <property type="entry name" value="Ribosomal_uL14"/>
    <property type="match status" value="1"/>
</dbReference>
<dbReference type="InterPro" id="IPR000218">
    <property type="entry name" value="Ribosomal_uL14"/>
</dbReference>
<dbReference type="InterPro" id="IPR005745">
    <property type="entry name" value="Ribosomal_uL14_bac-type"/>
</dbReference>
<dbReference type="InterPro" id="IPR019972">
    <property type="entry name" value="Ribosomal_uL14_CS"/>
</dbReference>
<dbReference type="InterPro" id="IPR036853">
    <property type="entry name" value="Ribosomal_uL14_sf"/>
</dbReference>
<dbReference type="NCBIfam" id="TIGR01067">
    <property type="entry name" value="rplN_bact"/>
    <property type="match status" value="1"/>
</dbReference>
<dbReference type="PANTHER" id="PTHR11761">
    <property type="entry name" value="50S/60S RIBOSOMAL PROTEIN L14/L23"/>
    <property type="match status" value="1"/>
</dbReference>
<dbReference type="PANTHER" id="PTHR11761:SF3">
    <property type="entry name" value="LARGE RIBOSOMAL SUBUNIT PROTEIN UL14M"/>
    <property type="match status" value="1"/>
</dbReference>
<dbReference type="Pfam" id="PF00238">
    <property type="entry name" value="Ribosomal_L14"/>
    <property type="match status" value="1"/>
</dbReference>
<dbReference type="SMART" id="SM01374">
    <property type="entry name" value="Ribosomal_L14"/>
    <property type="match status" value="1"/>
</dbReference>
<dbReference type="SUPFAM" id="SSF50193">
    <property type="entry name" value="Ribosomal protein L14"/>
    <property type="match status" value="1"/>
</dbReference>
<dbReference type="PROSITE" id="PS00049">
    <property type="entry name" value="RIBOSOMAL_L14"/>
    <property type="match status" value="1"/>
</dbReference>
<reference key="1">
    <citation type="journal article" date="1998" name="Nature">
        <title>Deciphering the biology of Mycobacterium tuberculosis from the complete genome sequence.</title>
        <authorList>
            <person name="Cole S.T."/>
            <person name="Brosch R."/>
            <person name="Parkhill J."/>
            <person name="Garnier T."/>
            <person name="Churcher C.M."/>
            <person name="Harris D.E."/>
            <person name="Gordon S.V."/>
            <person name="Eiglmeier K."/>
            <person name="Gas S."/>
            <person name="Barry C.E. III"/>
            <person name="Tekaia F."/>
            <person name="Badcock K."/>
            <person name="Basham D."/>
            <person name="Brown D."/>
            <person name="Chillingworth T."/>
            <person name="Connor R."/>
            <person name="Davies R.M."/>
            <person name="Devlin K."/>
            <person name="Feltwell T."/>
            <person name="Gentles S."/>
            <person name="Hamlin N."/>
            <person name="Holroyd S."/>
            <person name="Hornsby T."/>
            <person name="Jagels K."/>
            <person name="Krogh A."/>
            <person name="McLean J."/>
            <person name="Moule S."/>
            <person name="Murphy L.D."/>
            <person name="Oliver S."/>
            <person name="Osborne J."/>
            <person name="Quail M.A."/>
            <person name="Rajandream M.A."/>
            <person name="Rogers J."/>
            <person name="Rutter S."/>
            <person name="Seeger K."/>
            <person name="Skelton S."/>
            <person name="Squares S."/>
            <person name="Squares R."/>
            <person name="Sulston J.E."/>
            <person name="Taylor K."/>
            <person name="Whitehead S."/>
            <person name="Barrell B.G."/>
        </authorList>
    </citation>
    <scope>NUCLEOTIDE SEQUENCE [LARGE SCALE GENOMIC DNA]</scope>
    <source>
        <strain>ATCC 25618 / H37Rv</strain>
    </source>
</reference>
<reference key="2">
    <citation type="journal article" date="2011" name="Mol. Cell. Proteomics">
        <title>Proteogenomic analysis of Mycobacterium tuberculosis by high resolution mass spectrometry.</title>
        <authorList>
            <person name="Kelkar D.S."/>
            <person name="Kumar D."/>
            <person name="Kumar P."/>
            <person name="Balakrishnan L."/>
            <person name="Muthusamy B."/>
            <person name="Yadav A.K."/>
            <person name="Shrivastava P."/>
            <person name="Marimuthu A."/>
            <person name="Anand S."/>
            <person name="Sundaram H."/>
            <person name="Kingsbury R."/>
            <person name="Harsha H.C."/>
            <person name="Nair B."/>
            <person name="Prasad T.S."/>
            <person name="Chauhan D.S."/>
            <person name="Katoch K."/>
            <person name="Katoch V.M."/>
            <person name="Kumar P."/>
            <person name="Chaerkady R."/>
            <person name="Ramachandran S."/>
            <person name="Dash D."/>
            <person name="Pandey A."/>
        </authorList>
    </citation>
    <scope>IDENTIFICATION BY MASS SPECTROMETRY [LARGE SCALE ANALYSIS]</scope>
    <source>
        <strain>ATCC 25618 / H37Rv</strain>
    </source>
</reference>
<organism>
    <name type="scientific">Mycobacterium tuberculosis (strain ATCC 25618 / H37Rv)</name>
    <dbReference type="NCBI Taxonomy" id="83332"/>
    <lineage>
        <taxon>Bacteria</taxon>
        <taxon>Bacillati</taxon>
        <taxon>Actinomycetota</taxon>
        <taxon>Actinomycetes</taxon>
        <taxon>Mycobacteriales</taxon>
        <taxon>Mycobacteriaceae</taxon>
        <taxon>Mycobacterium</taxon>
        <taxon>Mycobacterium tuberculosis complex</taxon>
    </lineage>
</organism>
<keyword id="KW-0002">3D-structure</keyword>
<keyword id="KW-1185">Reference proteome</keyword>
<keyword id="KW-0687">Ribonucleoprotein</keyword>
<keyword id="KW-0689">Ribosomal protein</keyword>
<keyword id="KW-0694">RNA-binding</keyword>
<keyword id="KW-0699">rRNA-binding</keyword>